<proteinExistence type="inferred from homology"/>
<feature type="chain" id="PRO_1000117562" description="Deoxyuridine 5'-triphosphate nucleotidohydrolase">
    <location>
        <begin position="1"/>
        <end position="150"/>
    </location>
</feature>
<feature type="binding site" evidence="1">
    <location>
        <begin position="69"/>
        <end position="71"/>
    </location>
    <ligand>
        <name>substrate</name>
    </ligand>
</feature>
<feature type="binding site" evidence="1">
    <location>
        <position position="82"/>
    </location>
    <ligand>
        <name>substrate</name>
    </ligand>
</feature>
<feature type="binding site" evidence="1">
    <location>
        <begin position="86"/>
        <end position="88"/>
    </location>
    <ligand>
        <name>substrate</name>
    </ligand>
</feature>
<feature type="binding site" evidence="1">
    <location>
        <position position="96"/>
    </location>
    <ligand>
        <name>substrate</name>
    </ligand>
</feature>
<sequence>MKVQVKLLDPRLGKEWPLPSYATAGSAGLDLRACLDEAIEIEPGQTVLVKTGMAIYIHDVNFAGLILPRSGLGHKHGIVLGNLVGLIDSDYQGELMVSVWNRGQTTFRLEPGERLAQYVLVPVVQAEFEQVEEFEETLRGAGGFGHTGKQ</sequence>
<keyword id="KW-0378">Hydrolase</keyword>
<keyword id="KW-0460">Magnesium</keyword>
<keyword id="KW-0479">Metal-binding</keyword>
<keyword id="KW-0546">Nucleotide metabolism</keyword>
<dbReference type="EC" id="3.6.1.23" evidence="1"/>
<dbReference type="EMBL" id="CP001182">
    <property type="protein sequence ID" value="ACJ40726.1"/>
    <property type="molecule type" value="Genomic_DNA"/>
</dbReference>
<dbReference type="RefSeq" id="WP_000868152.1">
    <property type="nucleotide sequence ID" value="NC_011586.2"/>
</dbReference>
<dbReference type="SMR" id="B7I7U2"/>
<dbReference type="GeneID" id="92892815"/>
<dbReference type="KEGG" id="abn:AB57_0934"/>
<dbReference type="HOGENOM" id="CLU_068508_1_1_6"/>
<dbReference type="UniPathway" id="UPA00610">
    <property type="reaction ID" value="UER00666"/>
</dbReference>
<dbReference type="Proteomes" id="UP000007094">
    <property type="component" value="Chromosome"/>
</dbReference>
<dbReference type="GO" id="GO:0004170">
    <property type="term" value="F:dUTP diphosphatase activity"/>
    <property type="evidence" value="ECO:0007669"/>
    <property type="project" value="UniProtKB-UniRule"/>
</dbReference>
<dbReference type="GO" id="GO:0000287">
    <property type="term" value="F:magnesium ion binding"/>
    <property type="evidence" value="ECO:0007669"/>
    <property type="project" value="UniProtKB-UniRule"/>
</dbReference>
<dbReference type="GO" id="GO:0006226">
    <property type="term" value="P:dUMP biosynthetic process"/>
    <property type="evidence" value="ECO:0007669"/>
    <property type="project" value="UniProtKB-UniRule"/>
</dbReference>
<dbReference type="GO" id="GO:0046081">
    <property type="term" value="P:dUTP catabolic process"/>
    <property type="evidence" value="ECO:0007669"/>
    <property type="project" value="InterPro"/>
</dbReference>
<dbReference type="CDD" id="cd07557">
    <property type="entry name" value="trimeric_dUTPase"/>
    <property type="match status" value="1"/>
</dbReference>
<dbReference type="FunFam" id="2.70.40.10:FF:000002">
    <property type="entry name" value="dUTP diphosphatase"/>
    <property type="match status" value="1"/>
</dbReference>
<dbReference type="Gene3D" id="2.70.40.10">
    <property type="match status" value="1"/>
</dbReference>
<dbReference type="HAMAP" id="MF_00116">
    <property type="entry name" value="dUTPase_bact"/>
    <property type="match status" value="1"/>
</dbReference>
<dbReference type="InterPro" id="IPR008181">
    <property type="entry name" value="dUTPase"/>
</dbReference>
<dbReference type="InterPro" id="IPR029054">
    <property type="entry name" value="dUTPase-like"/>
</dbReference>
<dbReference type="InterPro" id="IPR036157">
    <property type="entry name" value="dUTPase-like_sf"/>
</dbReference>
<dbReference type="InterPro" id="IPR033704">
    <property type="entry name" value="dUTPase_trimeric"/>
</dbReference>
<dbReference type="NCBIfam" id="TIGR00576">
    <property type="entry name" value="dut"/>
    <property type="match status" value="1"/>
</dbReference>
<dbReference type="NCBIfam" id="NF001862">
    <property type="entry name" value="PRK00601.1"/>
    <property type="match status" value="1"/>
</dbReference>
<dbReference type="PANTHER" id="PTHR11241">
    <property type="entry name" value="DEOXYURIDINE 5'-TRIPHOSPHATE NUCLEOTIDOHYDROLASE"/>
    <property type="match status" value="1"/>
</dbReference>
<dbReference type="PANTHER" id="PTHR11241:SF0">
    <property type="entry name" value="DEOXYURIDINE 5'-TRIPHOSPHATE NUCLEOTIDOHYDROLASE"/>
    <property type="match status" value="1"/>
</dbReference>
<dbReference type="Pfam" id="PF00692">
    <property type="entry name" value="dUTPase"/>
    <property type="match status" value="1"/>
</dbReference>
<dbReference type="SUPFAM" id="SSF51283">
    <property type="entry name" value="dUTPase-like"/>
    <property type="match status" value="1"/>
</dbReference>
<comment type="function">
    <text evidence="1">This enzyme is involved in nucleotide metabolism: it produces dUMP, the immediate precursor of thymidine nucleotides and it decreases the intracellular concentration of dUTP so that uracil cannot be incorporated into DNA.</text>
</comment>
<comment type="catalytic activity">
    <reaction evidence="1">
        <text>dUTP + H2O = dUMP + diphosphate + H(+)</text>
        <dbReference type="Rhea" id="RHEA:10248"/>
        <dbReference type="ChEBI" id="CHEBI:15377"/>
        <dbReference type="ChEBI" id="CHEBI:15378"/>
        <dbReference type="ChEBI" id="CHEBI:33019"/>
        <dbReference type="ChEBI" id="CHEBI:61555"/>
        <dbReference type="ChEBI" id="CHEBI:246422"/>
        <dbReference type="EC" id="3.6.1.23"/>
    </reaction>
</comment>
<comment type="cofactor">
    <cofactor evidence="1">
        <name>Mg(2+)</name>
        <dbReference type="ChEBI" id="CHEBI:18420"/>
    </cofactor>
</comment>
<comment type="pathway">
    <text evidence="1">Pyrimidine metabolism; dUMP biosynthesis; dUMP from dCTP (dUTP route): step 2/2.</text>
</comment>
<comment type="similarity">
    <text evidence="1">Belongs to the dUTPase family.</text>
</comment>
<name>DUT_ACIB5</name>
<accession>B7I7U2</accession>
<organism>
    <name type="scientific">Acinetobacter baumannii (strain AB0057)</name>
    <dbReference type="NCBI Taxonomy" id="480119"/>
    <lineage>
        <taxon>Bacteria</taxon>
        <taxon>Pseudomonadati</taxon>
        <taxon>Pseudomonadota</taxon>
        <taxon>Gammaproteobacteria</taxon>
        <taxon>Moraxellales</taxon>
        <taxon>Moraxellaceae</taxon>
        <taxon>Acinetobacter</taxon>
        <taxon>Acinetobacter calcoaceticus/baumannii complex</taxon>
    </lineage>
</organism>
<gene>
    <name evidence="1" type="primary">dut</name>
    <name type="ordered locus">AB57_0934</name>
</gene>
<evidence type="ECO:0000255" key="1">
    <source>
        <dbReference type="HAMAP-Rule" id="MF_00116"/>
    </source>
</evidence>
<reference key="1">
    <citation type="journal article" date="2008" name="J. Bacteriol.">
        <title>Comparative genome sequence analysis of multidrug-resistant Acinetobacter baumannii.</title>
        <authorList>
            <person name="Adams M.D."/>
            <person name="Goglin K."/>
            <person name="Molyneaux N."/>
            <person name="Hujer K.M."/>
            <person name="Lavender H."/>
            <person name="Jamison J.J."/>
            <person name="MacDonald I.J."/>
            <person name="Martin K.M."/>
            <person name="Russo T."/>
            <person name="Campagnari A.A."/>
            <person name="Hujer A.M."/>
            <person name="Bonomo R.A."/>
            <person name="Gill S.R."/>
        </authorList>
    </citation>
    <scope>NUCLEOTIDE SEQUENCE [LARGE SCALE GENOMIC DNA]</scope>
    <source>
        <strain>AB0057</strain>
    </source>
</reference>
<protein>
    <recommendedName>
        <fullName evidence="1">Deoxyuridine 5'-triphosphate nucleotidohydrolase</fullName>
        <shortName evidence="1">dUTPase</shortName>
        <ecNumber evidence="1">3.6.1.23</ecNumber>
    </recommendedName>
    <alternativeName>
        <fullName evidence="1">dUTP pyrophosphatase</fullName>
    </alternativeName>
</protein>